<feature type="chain" id="PRO_0000132375" description="Small ribosomal subunit protein uS4">
    <location>
        <begin position="1"/>
        <end position="201"/>
    </location>
</feature>
<feature type="domain" description="S4 RNA-binding" evidence="1">
    <location>
        <begin position="91"/>
        <end position="151"/>
    </location>
</feature>
<organism>
    <name type="scientific">Corynebacterium glutamicum (strain ATCC 13032 / DSM 20300 / JCM 1318 / BCRC 11384 / CCUG 27702 / LMG 3730 / NBRC 12168 / NCIMB 10025 / NRRL B-2784 / 534)</name>
    <dbReference type="NCBI Taxonomy" id="196627"/>
    <lineage>
        <taxon>Bacteria</taxon>
        <taxon>Bacillati</taxon>
        <taxon>Actinomycetota</taxon>
        <taxon>Actinomycetes</taxon>
        <taxon>Mycobacteriales</taxon>
        <taxon>Corynebacteriaceae</taxon>
        <taxon>Corynebacterium</taxon>
    </lineage>
</organism>
<evidence type="ECO:0000255" key="1">
    <source>
        <dbReference type="HAMAP-Rule" id="MF_01306"/>
    </source>
</evidence>
<evidence type="ECO:0000305" key="2"/>
<dbReference type="EMBL" id="BA000036">
    <property type="protein sequence ID" value="BAB97956.1"/>
    <property type="molecule type" value="Genomic_DNA"/>
</dbReference>
<dbReference type="EMBL" id="BX927149">
    <property type="protein sequence ID" value="CAF19269.1"/>
    <property type="molecule type" value="Genomic_DNA"/>
</dbReference>
<dbReference type="RefSeq" id="NP_599800.1">
    <property type="nucleotide sequence ID" value="NC_003450.3"/>
</dbReference>
<dbReference type="RefSeq" id="WP_011013730.1">
    <property type="nucleotide sequence ID" value="NC_003450.3"/>
</dbReference>
<dbReference type="SMR" id="Q8NSV4"/>
<dbReference type="STRING" id="196627.cg0654"/>
<dbReference type="GeneID" id="1018568"/>
<dbReference type="KEGG" id="cgb:cg0654"/>
<dbReference type="KEGG" id="cgl:Cgl0563"/>
<dbReference type="PATRIC" id="fig|196627.13.peg.555"/>
<dbReference type="eggNOG" id="COG0522">
    <property type="taxonomic scope" value="Bacteria"/>
</dbReference>
<dbReference type="HOGENOM" id="CLU_092403_0_2_11"/>
<dbReference type="OrthoDB" id="9803672at2"/>
<dbReference type="BioCyc" id="CORYNE:G18NG-10125-MONOMER"/>
<dbReference type="Proteomes" id="UP000000582">
    <property type="component" value="Chromosome"/>
</dbReference>
<dbReference type="Proteomes" id="UP000001009">
    <property type="component" value="Chromosome"/>
</dbReference>
<dbReference type="GO" id="GO:0015935">
    <property type="term" value="C:small ribosomal subunit"/>
    <property type="evidence" value="ECO:0007669"/>
    <property type="project" value="InterPro"/>
</dbReference>
<dbReference type="GO" id="GO:0019843">
    <property type="term" value="F:rRNA binding"/>
    <property type="evidence" value="ECO:0007669"/>
    <property type="project" value="UniProtKB-UniRule"/>
</dbReference>
<dbReference type="GO" id="GO:0003735">
    <property type="term" value="F:structural constituent of ribosome"/>
    <property type="evidence" value="ECO:0007669"/>
    <property type="project" value="InterPro"/>
</dbReference>
<dbReference type="GO" id="GO:0042274">
    <property type="term" value="P:ribosomal small subunit biogenesis"/>
    <property type="evidence" value="ECO:0007669"/>
    <property type="project" value="TreeGrafter"/>
</dbReference>
<dbReference type="GO" id="GO:0006412">
    <property type="term" value="P:translation"/>
    <property type="evidence" value="ECO:0007669"/>
    <property type="project" value="UniProtKB-UniRule"/>
</dbReference>
<dbReference type="CDD" id="cd00165">
    <property type="entry name" value="S4"/>
    <property type="match status" value="1"/>
</dbReference>
<dbReference type="FunFam" id="3.10.290.10:FF:000001">
    <property type="entry name" value="30S ribosomal protein S4"/>
    <property type="match status" value="1"/>
</dbReference>
<dbReference type="Gene3D" id="1.10.1050.10">
    <property type="entry name" value="Ribosomal Protein S4 Delta 41, Chain A, domain 1"/>
    <property type="match status" value="1"/>
</dbReference>
<dbReference type="Gene3D" id="3.10.290.10">
    <property type="entry name" value="RNA-binding S4 domain"/>
    <property type="match status" value="1"/>
</dbReference>
<dbReference type="HAMAP" id="MF_01306_B">
    <property type="entry name" value="Ribosomal_uS4_B"/>
    <property type="match status" value="1"/>
</dbReference>
<dbReference type="InterPro" id="IPR022801">
    <property type="entry name" value="Ribosomal_uS4"/>
</dbReference>
<dbReference type="InterPro" id="IPR005709">
    <property type="entry name" value="Ribosomal_uS4_bac-type"/>
</dbReference>
<dbReference type="InterPro" id="IPR018079">
    <property type="entry name" value="Ribosomal_uS4_CS"/>
</dbReference>
<dbReference type="InterPro" id="IPR001912">
    <property type="entry name" value="Ribosomal_uS4_N"/>
</dbReference>
<dbReference type="InterPro" id="IPR002942">
    <property type="entry name" value="S4_RNA-bd"/>
</dbReference>
<dbReference type="InterPro" id="IPR036986">
    <property type="entry name" value="S4_RNA-bd_sf"/>
</dbReference>
<dbReference type="NCBIfam" id="NF003717">
    <property type="entry name" value="PRK05327.1"/>
    <property type="match status" value="1"/>
</dbReference>
<dbReference type="NCBIfam" id="TIGR01017">
    <property type="entry name" value="rpsD_bact"/>
    <property type="match status" value="1"/>
</dbReference>
<dbReference type="PANTHER" id="PTHR11831">
    <property type="entry name" value="30S 40S RIBOSOMAL PROTEIN"/>
    <property type="match status" value="1"/>
</dbReference>
<dbReference type="PANTHER" id="PTHR11831:SF4">
    <property type="entry name" value="SMALL RIBOSOMAL SUBUNIT PROTEIN US4M"/>
    <property type="match status" value="1"/>
</dbReference>
<dbReference type="Pfam" id="PF00163">
    <property type="entry name" value="Ribosomal_S4"/>
    <property type="match status" value="1"/>
</dbReference>
<dbReference type="Pfam" id="PF01479">
    <property type="entry name" value="S4"/>
    <property type="match status" value="1"/>
</dbReference>
<dbReference type="SMART" id="SM01390">
    <property type="entry name" value="Ribosomal_S4"/>
    <property type="match status" value="1"/>
</dbReference>
<dbReference type="SMART" id="SM00363">
    <property type="entry name" value="S4"/>
    <property type="match status" value="1"/>
</dbReference>
<dbReference type="SUPFAM" id="SSF55174">
    <property type="entry name" value="Alpha-L RNA-binding motif"/>
    <property type="match status" value="1"/>
</dbReference>
<dbReference type="PROSITE" id="PS00632">
    <property type="entry name" value="RIBOSOMAL_S4"/>
    <property type="match status" value="1"/>
</dbReference>
<dbReference type="PROSITE" id="PS50889">
    <property type="entry name" value="S4"/>
    <property type="match status" value="1"/>
</dbReference>
<protein>
    <recommendedName>
        <fullName evidence="1">Small ribosomal subunit protein uS4</fullName>
    </recommendedName>
    <alternativeName>
        <fullName evidence="2">30S ribosomal protein S4</fullName>
    </alternativeName>
</protein>
<gene>
    <name evidence="1" type="primary">rpsD</name>
    <name type="ordered locus">Cgl0563</name>
    <name type="ordered locus">cg0654</name>
</gene>
<accession>Q8NSV4</accession>
<reference key="1">
    <citation type="journal article" date="2003" name="Appl. Microbiol. Biotechnol.">
        <title>The Corynebacterium glutamicum genome: features and impacts on biotechnological processes.</title>
        <authorList>
            <person name="Ikeda M."/>
            <person name="Nakagawa S."/>
        </authorList>
    </citation>
    <scope>NUCLEOTIDE SEQUENCE [LARGE SCALE GENOMIC DNA]</scope>
    <source>
        <strain>ATCC 13032 / DSM 20300 / JCM 1318 / BCRC 11384 / CCUG 27702 / LMG 3730 / NBRC 12168 / NCIMB 10025 / NRRL B-2784 / 534</strain>
    </source>
</reference>
<reference key="2">
    <citation type="journal article" date="2003" name="J. Biotechnol.">
        <title>The complete Corynebacterium glutamicum ATCC 13032 genome sequence and its impact on the production of L-aspartate-derived amino acids and vitamins.</title>
        <authorList>
            <person name="Kalinowski J."/>
            <person name="Bathe B."/>
            <person name="Bartels D."/>
            <person name="Bischoff N."/>
            <person name="Bott M."/>
            <person name="Burkovski A."/>
            <person name="Dusch N."/>
            <person name="Eggeling L."/>
            <person name="Eikmanns B.J."/>
            <person name="Gaigalat L."/>
            <person name="Goesmann A."/>
            <person name="Hartmann M."/>
            <person name="Huthmacher K."/>
            <person name="Kraemer R."/>
            <person name="Linke B."/>
            <person name="McHardy A.C."/>
            <person name="Meyer F."/>
            <person name="Moeckel B."/>
            <person name="Pfefferle W."/>
            <person name="Puehler A."/>
            <person name="Rey D.A."/>
            <person name="Rueckert C."/>
            <person name="Rupp O."/>
            <person name="Sahm H."/>
            <person name="Wendisch V.F."/>
            <person name="Wiegraebe I."/>
            <person name="Tauch A."/>
        </authorList>
    </citation>
    <scope>NUCLEOTIDE SEQUENCE [LARGE SCALE GENOMIC DNA]</scope>
    <source>
        <strain>ATCC 13032 / DSM 20300 / JCM 1318 / BCRC 11384 / CCUG 27702 / LMG 3730 / NBRC 12168 / NCIMB 10025 / NRRL B-2784 / 534</strain>
    </source>
</reference>
<comment type="function">
    <text evidence="1">One of the primary rRNA binding proteins, it binds directly to 16S rRNA where it nucleates assembly of the body of the 30S subunit.</text>
</comment>
<comment type="function">
    <text evidence="1">With S5 and S12 plays an important role in translational accuracy.</text>
</comment>
<comment type="subunit">
    <text evidence="1">Part of the 30S ribosomal subunit. Contacts protein S5. The interaction surface between S4 and S5 is involved in control of translational fidelity.</text>
</comment>
<comment type="similarity">
    <text evidence="1">Belongs to the universal ribosomal protein uS4 family.</text>
</comment>
<sequence>MARYTGPATRKSRRLRVDLVGGDMAFERRPYPPGQAGRARIKESEYLLQLQEKQKARFIYGVMEKQFRRYYAEANRRAGKTGENLVVLLESRLDNVVYRAGLANTRRQARQLVSHGHFTVNGKAIDVPSFRVSQYDIINVREKSQKMNWFEEAQDNLADAVVPAWLQVVPENLRILVHQLPERAQIDIPLQEQLIVEFYSK</sequence>
<proteinExistence type="inferred from homology"/>
<name>RS4_CORGL</name>
<keyword id="KW-1185">Reference proteome</keyword>
<keyword id="KW-0687">Ribonucleoprotein</keyword>
<keyword id="KW-0689">Ribosomal protein</keyword>
<keyword id="KW-0694">RNA-binding</keyword>
<keyword id="KW-0699">rRNA-binding</keyword>